<comment type="function">
    <text evidence="1">Catalyzes the condensation of the acetyl group of acetyl-CoA with 3-methyl-2-oxobutanoate (2-ketoisovalerate) to form 3-carboxy-3-hydroxy-4-methylpentanoate (2-isopropylmalate).</text>
</comment>
<comment type="catalytic activity">
    <reaction evidence="1">
        <text>3-methyl-2-oxobutanoate + acetyl-CoA + H2O = (2S)-2-isopropylmalate + CoA + H(+)</text>
        <dbReference type="Rhea" id="RHEA:21524"/>
        <dbReference type="ChEBI" id="CHEBI:1178"/>
        <dbReference type="ChEBI" id="CHEBI:11851"/>
        <dbReference type="ChEBI" id="CHEBI:15377"/>
        <dbReference type="ChEBI" id="CHEBI:15378"/>
        <dbReference type="ChEBI" id="CHEBI:57287"/>
        <dbReference type="ChEBI" id="CHEBI:57288"/>
        <dbReference type="EC" id="2.3.3.13"/>
    </reaction>
</comment>
<comment type="cofactor">
    <cofactor evidence="1">
        <name>Mn(2+)</name>
        <dbReference type="ChEBI" id="CHEBI:29035"/>
    </cofactor>
</comment>
<comment type="pathway">
    <text evidence="1">Amino-acid biosynthesis; L-leucine biosynthesis; L-leucine from 3-methyl-2-oxobutanoate: step 1/4.</text>
</comment>
<comment type="subunit">
    <text evidence="1">Homodimer.</text>
</comment>
<comment type="subcellular location">
    <subcellularLocation>
        <location evidence="1">Cytoplasm</location>
    </subcellularLocation>
</comment>
<comment type="similarity">
    <text evidence="1 2">Belongs to the alpha-IPM synthase/homocitrate synthase family. LeuA type 1 subfamily.</text>
</comment>
<sequence length="533" mass="57413">MNSPVDRILIFDTTLRDGEQSPGATLTVEEKLSIARALARLGVDIIEAGFPFASPGDFEAVQKIAQTVGTENGPVICGLARATQKDIKAAAEALKPAAKHRIHTFLATSDIHLEHKLKKTRAEVLAIVPEMVAYAKSLVNDIEFSPEDAGRSDPEFLYQVLEAAISAGATTINIPDTVGYTTPAEYGALIKGIADNVPNIDQAIISVHGHNDLGLAVANFLEAVKNGARQLECTINGIGERAGNAALEELVMALHVRRSYFNPFLGRPADSTAPLTNIDTKHIYATSRLVSELTGMMVQPNKAIVGANAFAHESGIHQDGVLKNKLTYEIMDAESIGLTNNQIVLGKLSGRNAFGTRLKELGFDLSDTELNNAFIRFKEVADKRKEITDWDLEAIVNDEIRQPPELFRLERVQVSCGEPSVPTATLTIRTPAGPEETAVAIGTGPVDAVYKAINQIVQLPNELLEYSVTSVTEGIDALGKVSVRLRHNGVIYTGYAANTDIIVASARAYLGALNRLYAALEKSREHPPVVASL</sequence>
<organism>
    <name type="scientific">Synechocystis sp. (strain ATCC 27184 / PCC 6803 / Kazusa)</name>
    <dbReference type="NCBI Taxonomy" id="1111708"/>
    <lineage>
        <taxon>Bacteria</taxon>
        <taxon>Bacillati</taxon>
        <taxon>Cyanobacteriota</taxon>
        <taxon>Cyanophyceae</taxon>
        <taxon>Synechococcales</taxon>
        <taxon>Merismopediaceae</taxon>
        <taxon>Synechocystis</taxon>
    </lineage>
</organism>
<keyword id="KW-0028">Amino-acid biosynthesis</keyword>
<keyword id="KW-0100">Branched-chain amino acid biosynthesis</keyword>
<keyword id="KW-0963">Cytoplasm</keyword>
<keyword id="KW-0432">Leucine biosynthesis</keyword>
<keyword id="KW-0464">Manganese</keyword>
<keyword id="KW-0479">Metal-binding</keyword>
<keyword id="KW-1185">Reference proteome</keyword>
<keyword id="KW-0808">Transferase</keyword>
<accession>P48576</accession>
<feature type="chain" id="PRO_0000140390" description="2-isopropylmalate synthase">
    <location>
        <begin position="1"/>
        <end position="533"/>
    </location>
</feature>
<feature type="domain" description="Pyruvate carboxyltransferase" evidence="1">
    <location>
        <begin position="8"/>
        <end position="269"/>
    </location>
</feature>
<feature type="region of interest" description="Regulatory domain" evidence="1">
    <location>
        <begin position="408"/>
        <end position="533"/>
    </location>
</feature>
<feature type="binding site" evidence="1">
    <location>
        <position position="17"/>
    </location>
    <ligand>
        <name>Mn(2+)</name>
        <dbReference type="ChEBI" id="CHEBI:29035"/>
    </ligand>
</feature>
<feature type="binding site" evidence="1">
    <location>
        <position position="208"/>
    </location>
    <ligand>
        <name>Mn(2+)</name>
        <dbReference type="ChEBI" id="CHEBI:29035"/>
    </ligand>
</feature>
<feature type="binding site" evidence="1">
    <location>
        <position position="210"/>
    </location>
    <ligand>
        <name>Mn(2+)</name>
        <dbReference type="ChEBI" id="CHEBI:29035"/>
    </ligand>
</feature>
<feature type="binding site" evidence="1">
    <location>
        <position position="244"/>
    </location>
    <ligand>
        <name>Mn(2+)</name>
        <dbReference type="ChEBI" id="CHEBI:29035"/>
    </ligand>
</feature>
<reference key="1">
    <citation type="journal article" date="1995" name="DNA Res.">
        <title>Sequence analysis of the genome of the unicellular cyanobacterium Synechocystis sp. strain PCC6803. I. Sequence features in the 1 Mb region from map positions 64% to 92% of the genome.</title>
        <authorList>
            <person name="Kaneko T."/>
            <person name="Tanaka A."/>
            <person name="Sato S."/>
            <person name="Kotani H."/>
            <person name="Sazuka T."/>
            <person name="Miyajima N."/>
            <person name="Sugiura M."/>
            <person name="Tabata S."/>
        </authorList>
    </citation>
    <scope>NUCLEOTIDE SEQUENCE [LARGE SCALE GENOMIC DNA]</scope>
    <source>
        <strain>ATCC 27184 / PCC 6803 / N-1</strain>
    </source>
</reference>
<reference key="2">
    <citation type="journal article" date="1996" name="DNA Res.">
        <title>Sequence analysis of the genome of the unicellular cyanobacterium Synechocystis sp. strain PCC6803. II. Sequence determination of the entire genome and assignment of potential protein-coding regions.</title>
        <authorList>
            <person name="Kaneko T."/>
            <person name="Sato S."/>
            <person name="Kotani H."/>
            <person name="Tanaka A."/>
            <person name="Asamizu E."/>
            <person name="Nakamura Y."/>
            <person name="Miyajima N."/>
            <person name="Hirosawa M."/>
            <person name="Sugiura M."/>
            <person name="Sasamoto S."/>
            <person name="Kimura T."/>
            <person name="Hosouchi T."/>
            <person name="Matsuno A."/>
            <person name="Muraki A."/>
            <person name="Nakazaki N."/>
            <person name="Naruo K."/>
            <person name="Okumura S."/>
            <person name="Shimpo S."/>
            <person name="Takeuchi C."/>
            <person name="Wada T."/>
            <person name="Watanabe A."/>
            <person name="Yamada M."/>
            <person name="Yasuda M."/>
            <person name="Tabata S."/>
        </authorList>
    </citation>
    <scope>NUCLEOTIDE SEQUENCE [LARGE SCALE GENOMIC DNA]</scope>
    <source>
        <strain>ATCC 27184 / PCC 6803 / Kazusa</strain>
    </source>
</reference>
<gene>
    <name evidence="1" type="primary">leuA</name>
    <name type="ordered locus">slr0186</name>
</gene>
<evidence type="ECO:0000255" key="1">
    <source>
        <dbReference type="HAMAP-Rule" id="MF_01025"/>
    </source>
</evidence>
<evidence type="ECO:0000305" key="2"/>
<dbReference type="EC" id="2.3.3.13" evidence="1"/>
<dbReference type="EMBL" id="BA000022">
    <property type="protein sequence ID" value="BAA10079.1"/>
    <property type="molecule type" value="Genomic_DNA"/>
</dbReference>
<dbReference type="PIR" id="S76101">
    <property type="entry name" value="S76101"/>
</dbReference>
<dbReference type="SMR" id="P48576"/>
<dbReference type="FunCoup" id="P48576">
    <property type="interactions" value="342"/>
</dbReference>
<dbReference type="IntAct" id="P48576">
    <property type="interactions" value="1"/>
</dbReference>
<dbReference type="STRING" id="1148.gene:10499571"/>
<dbReference type="PaxDb" id="1148-1001454"/>
<dbReference type="EnsemblBacteria" id="BAA10079">
    <property type="protein sequence ID" value="BAA10079"/>
    <property type="gene ID" value="BAA10079"/>
</dbReference>
<dbReference type="KEGG" id="syn:slr0186"/>
<dbReference type="eggNOG" id="COG0119">
    <property type="taxonomic scope" value="Bacteria"/>
</dbReference>
<dbReference type="InParanoid" id="P48576"/>
<dbReference type="PhylomeDB" id="P48576"/>
<dbReference type="UniPathway" id="UPA00048">
    <property type="reaction ID" value="UER00070"/>
</dbReference>
<dbReference type="Proteomes" id="UP000001425">
    <property type="component" value="Chromosome"/>
</dbReference>
<dbReference type="GO" id="GO:0005737">
    <property type="term" value="C:cytoplasm"/>
    <property type="evidence" value="ECO:0007669"/>
    <property type="project" value="UniProtKB-SubCell"/>
</dbReference>
<dbReference type="GO" id="GO:0003852">
    <property type="term" value="F:2-isopropylmalate synthase activity"/>
    <property type="evidence" value="ECO:0000318"/>
    <property type="project" value="GO_Central"/>
</dbReference>
<dbReference type="GO" id="GO:0003985">
    <property type="term" value="F:acetyl-CoA C-acetyltransferase activity"/>
    <property type="evidence" value="ECO:0007669"/>
    <property type="project" value="UniProtKB-UniRule"/>
</dbReference>
<dbReference type="GO" id="GO:0030145">
    <property type="term" value="F:manganese ion binding"/>
    <property type="evidence" value="ECO:0007669"/>
    <property type="project" value="UniProtKB-UniRule"/>
</dbReference>
<dbReference type="GO" id="GO:0009098">
    <property type="term" value="P:L-leucine biosynthetic process"/>
    <property type="evidence" value="ECO:0000318"/>
    <property type="project" value="GO_Central"/>
</dbReference>
<dbReference type="CDD" id="cd07940">
    <property type="entry name" value="DRE_TIM_IPMS"/>
    <property type="match status" value="1"/>
</dbReference>
<dbReference type="FunFam" id="1.10.238.260:FF:000001">
    <property type="entry name" value="2-isopropylmalate synthase"/>
    <property type="match status" value="1"/>
</dbReference>
<dbReference type="FunFam" id="3.20.20.70:FF:000010">
    <property type="entry name" value="2-isopropylmalate synthase"/>
    <property type="match status" value="1"/>
</dbReference>
<dbReference type="FunFam" id="3.30.160.270:FF:000001">
    <property type="entry name" value="2-isopropylmalate synthase"/>
    <property type="match status" value="1"/>
</dbReference>
<dbReference type="Gene3D" id="1.10.238.260">
    <property type="match status" value="1"/>
</dbReference>
<dbReference type="Gene3D" id="3.30.160.270">
    <property type="match status" value="1"/>
</dbReference>
<dbReference type="Gene3D" id="3.20.20.70">
    <property type="entry name" value="Aldolase class I"/>
    <property type="match status" value="1"/>
</dbReference>
<dbReference type="HAMAP" id="MF_01025">
    <property type="entry name" value="LeuA_type1"/>
    <property type="match status" value="1"/>
</dbReference>
<dbReference type="InterPro" id="IPR050073">
    <property type="entry name" value="2-IPM_HCS-like"/>
</dbReference>
<dbReference type="InterPro" id="IPR013709">
    <property type="entry name" value="2-isopropylmalate_synth_dimer"/>
</dbReference>
<dbReference type="InterPro" id="IPR002034">
    <property type="entry name" value="AIPM/Hcit_synth_CS"/>
</dbReference>
<dbReference type="InterPro" id="IPR013785">
    <property type="entry name" value="Aldolase_TIM"/>
</dbReference>
<dbReference type="InterPro" id="IPR054691">
    <property type="entry name" value="LeuA/HCS_post-cat"/>
</dbReference>
<dbReference type="InterPro" id="IPR036230">
    <property type="entry name" value="LeuA_allosteric_dom_sf"/>
</dbReference>
<dbReference type="InterPro" id="IPR005671">
    <property type="entry name" value="LeuA_bact_synth"/>
</dbReference>
<dbReference type="InterPro" id="IPR000891">
    <property type="entry name" value="PYR_CT"/>
</dbReference>
<dbReference type="NCBIfam" id="TIGR00973">
    <property type="entry name" value="leuA_bact"/>
    <property type="match status" value="1"/>
</dbReference>
<dbReference type="NCBIfam" id="NF002086">
    <property type="entry name" value="PRK00915.1-3"/>
    <property type="match status" value="1"/>
</dbReference>
<dbReference type="PANTHER" id="PTHR10277:SF9">
    <property type="entry name" value="2-ISOPROPYLMALATE SYNTHASE 1, CHLOROPLASTIC-RELATED"/>
    <property type="match status" value="1"/>
</dbReference>
<dbReference type="PANTHER" id="PTHR10277">
    <property type="entry name" value="HOMOCITRATE SYNTHASE-RELATED"/>
    <property type="match status" value="1"/>
</dbReference>
<dbReference type="Pfam" id="PF22617">
    <property type="entry name" value="HCS_D2"/>
    <property type="match status" value="1"/>
</dbReference>
<dbReference type="Pfam" id="PF00682">
    <property type="entry name" value="HMGL-like"/>
    <property type="match status" value="1"/>
</dbReference>
<dbReference type="Pfam" id="PF08502">
    <property type="entry name" value="LeuA_dimer"/>
    <property type="match status" value="1"/>
</dbReference>
<dbReference type="SMART" id="SM00917">
    <property type="entry name" value="LeuA_dimer"/>
    <property type="match status" value="1"/>
</dbReference>
<dbReference type="SUPFAM" id="SSF110921">
    <property type="entry name" value="2-isopropylmalate synthase LeuA, allosteric (dimerisation) domain"/>
    <property type="match status" value="1"/>
</dbReference>
<dbReference type="SUPFAM" id="SSF51569">
    <property type="entry name" value="Aldolase"/>
    <property type="match status" value="1"/>
</dbReference>
<dbReference type="PROSITE" id="PS00815">
    <property type="entry name" value="AIPM_HOMOCIT_SYNTH_1"/>
    <property type="match status" value="1"/>
</dbReference>
<dbReference type="PROSITE" id="PS00816">
    <property type="entry name" value="AIPM_HOMOCIT_SYNTH_2"/>
    <property type="match status" value="1"/>
</dbReference>
<dbReference type="PROSITE" id="PS50991">
    <property type="entry name" value="PYR_CT"/>
    <property type="match status" value="1"/>
</dbReference>
<name>LEU1_SYNY3</name>
<proteinExistence type="inferred from homology"/>
<protein>
    <recommendedName>
        <fullName evidence="1">2-isopropylmalate synthase</fullName>
        <ecNumber evidence="1">2.3.3.13</ecNumber>
    </recommendedName>
    <alternativeName>
        <fullName evidence="1">Alpha-IPM synthase</fullName>
    </alternativeName>
    <alternativeName>
        <fullName evidence="1">Alpha-isopropylmalate synthase</fullName>
    </alternativeName>
</protein>